<evidence type="ECO:0000250" key="1"/>
<evidence type="ECO:0000250" key="2">
    <source>
        <dbReference type="UniProtKB" id="P33643"/>
    </source>
</evidence>
<evidence type="ECO:0000255" key="3">
    <source>
        <dbReference type="PROSITE-ProRule" id="PRU00182"/>
    </source>
</evidence>
<evidence type="ECO:0000305" key="4"/>
<protein>
    <recommendedName>
        <fullName evidence="2">Ribosomal large subunit pseudouridine synthase D</fullName>
        <ecNumber evidence="2">5.4.99.23</ecNumber>
    </recommendedName>
    <alternativeName>
        <fullName>23S rRNA pseudouridine(1911/1915/1917) synthase</fullName>
    </alternativeName>
    <alternativeName>
        <fullName>rRNA pseudouridylate synthase D</fullName>
    </alternativeName>
    <alternativeName>
        <fullName>rRNA-uridine isomerase D</fullName>
    </alternativeName>
</protein>
<accession>Q8P682</accession>
<reference key="1">
    <citation type="journal article" date="2002" name="Nature">
        <title>Comparison of the genomes of two Xanthomonas pathogens with differing host specificities.</title>
        <authorList>
            <person name="da Silva A.C.R."/>
            <person name="Ferro J.A."/>
            <person name="Reinach F.C."/>
            <person name="Farah C.S."/>
            <person name="Furlan L.R."/>
            <person name="Quaggio R.B."/>
            <person name="Monteiro-Vitorello C.B."/>
            <person name="Van Sluys M.A."/>
            <person name="Almeida N.F. Jr."/>
            <person name="Alves L.M.C."/>
            <person name="do Amaral A.M."/>
            <person name="Bertolini M.C."/>
            <person name="Camargo L.E.A."/>
            <person name="Camarotte G."/>
            <person name="Cannavan F."/>
            <person name="Cardozo J."/>
            <person name="Chambergo F."/>
            <person name="Ciapina L.P."/>
            <person name="Cicarelli R.M.B."/>
            <person name="Coutinho L.L."/>
            <person name="Cursino-Santos J.R."/>
            <person name="El-Dorry H."/>
            <person name="Faria J.B."/>
            <person name="Ferreira A.J.S."/>
            <person name="Ferreira R.C.C."/>
            <person name="Ferro M.I.T."/>
            <person name="Formighieri E.F."/>
            <person name="Franco M.C."/>
            <person name="Greggio C.C."/>
            <person name="Gruber A."/>
            <person name="Katsuyama A.M."/>
            <person name="Kishi L.T."/>
            <person name="Leite R.P."/>
            <person name="Lemos E.G.M."/>
            <person name="Lemos M.V.F."/>
            <person name="Locali E.C."/>
            <person name="Machado M.A."/>
            <person name="Madeira A.M.B.N."/>
            <person name="Martinez-Rossi N.M."/>
            <person name="Martins E.C."/>
            <person name="Meidanis J."/>
            <person name="Menck C.F.M."/>
            <person name="Miyaki C.Y."/>
            <person name="Moon D.H."/>
            <person name="Moreira L.M."/>
            <person name="Novo M.T.M."/>
            <person name="Okura V.K."/>
            <person name="Oliveira M.C."/>
            <person name="Oliveira V.R."/>
            <person name="Pereira H.A."/>
            <person name="Rossi A."/>
            <person name="Sena J.A.D."/>
            <person name="Silva C."/>
            <person name="de Souza R.F."/>
            <person name="Spinola L.A.F."/>
            <person name="Takita M.A."/>
            <person name="Tamura R.E."/>
            <person name="Teixeira E.C."/>
            <person name="Tezza R.I.D."/>
            <person name="Trindade dos Santos M."/>
            <person name="Truffi D."/>
            <person name="Tsai S.M."/>
            <person name="White F.F."/>
            <person name="Setubal J.C."/>
            <person name="Kitajima J.P."/>
        </authorList>
    </citation>
    <scope>NUCLEOTIDE SEQUENCE [LARGE SCALE GENOMIC DNA]</scope>
    <source>
        <strain>ATCC 33913 / DSM 3586 / NCPPB 528 / LMG 568 / P 25</strain>
    </source>
</reference>
<organism>
    <name type="scientific">Xanthomonas campestris pv. campestris (strain ATCC 33913 / DSM 3586 / NCPPB 528 / LMG 568 / P 25)</name>
    <dbReference type="NCBI Taxonomy" id="190485"/>
    <lineage>
        <taxon>Bacteria</taxon>
        <taxon>Pseudomonadati</taxon>
        <taxon>Pseudomonadota</taxon>
        <taxon>Gammaproteobacteria</taxon>
        <taxon>Lysobacterales</taxon>
        <taxon>Lysobacteraceae</taxon>
        <taxon>Xanthomonas</taxon>
    </lineage>
</organism>
<proteinExistence type="inferred from homology"/>
<feature type="chain" id="PRO_0000162706" description="Ribosomal large subunit pseudouridine synthase D">
    <location>
        <begin position="1"/>
        <end position="331"/>
    </location>
</feature>
<feature type="domain" description="S4 RNA-binding" evidence="3">
    <location>
        <begin position="25"/>
        <end position="97"/>
    </location>
</feature>
<feature type="active site" evidence="1">
    <location>
        <position position="145"/>
    </location>
</feature>
<comment type="function">
    <text evidence="2">Responsible for synthesis of pseudouridine from uracil at positions 1911, 1915 and 1917 in 23S ribosomal RNA.</text>
</comment>
<comment type="catalytic activity">
    <reaction evidence="2">
        <text>uridine(1911/1915/1917) in 23S rRNA = pseudouridine(1911/1915/1917) in 23S rRNA</text>
        <dbReference type="Rhea" id="RHEA:42524"/>
        <dbReference type="Rhea" id="RHEA-COMP:10097"/>
        <dbReference type="Rhea" id="RHEA-COMP:10098"/>
        <dbReference type="ChEBI" id="CHEBI:65314"/>
        <dbReference type="ChEBI" id="CHEBI:65315"/>
        <dbReference type="EC" id="5.4.99.23"/>
    </reaction>
</comment>
<comment type="subcellular location">
    <subcellularLocation>
        <location evidence="2">Cytoplasm</location>
    </subcellularLocation>
    <text evidence="2">Associates with late stage pre-50S ribosomal subunits.</text>
</comment>
<comment type="similarity">
    <text evidence="4">Belongs to the pseudouridine synthase RluA family.</text>
</comment>
<name>RLUD_XANCP</name>
<gene>
    <name type="primary">rluD</name>
    <name type="ordered locus">XCC3088</name>
</gene>
<dbReference type="EC" id="5.4.99.23" evidence="2"/>
<dbReference type="EMBL" id="AE008922">
    <property type="protein sequence ID" value="AAM42359.1"/>
    <property type="molecule type" value="Genomic_DNA"/>
</dbReference>
<dbReference type="RefSeq" id="NP_638435.1">
    <property type="nucleotide sequence ID" value="NC_003902.1"/>
</dbReference>
<dbReference type="RefSeq" id="WP_011038203.1">
    <property type="nucleotide sequence ID" value="NC_003902.1"/>
</dbReference>
<dbReference type="SMR" id="Q8P682"/>
<dbReference type="STRING" id="190485.XCC3088"/>
<dbReference type="EnsemblBacteria" id="AAM42359">
    <property type="protein sequence ID" value="AAM42359"/>
    <property type="gene ID" value="XCC3088"/>
</dbReference>
<dbReference type="KEGG" id="xcc:XCC3088"/>
<dbReference type="PATRIC" id="fig|190485.4.peg.3299"/>
<dbReference type="eggNOG" id="COG0564">
    <property type="taxonomic scope" value="Bacteria"/>
</dbReference>
<dbReference type="HOGENOM" id="CLU_016902_4_0_6"/>
<dbReference type="OrthoDB" id="9807829at2"/>
<dbReference type="Proteomes" id="UP000001010">
    <property type="component" value="Chromosome"/>
</dbReference>
<dbReference type="GO" id="GO:0005737">
    <property type="term" value="C:cytoplasm"/>
    <property type="evidence" value="ECO:0007669"/>
    <property type="project" value="UniProtKB-SubCell"/>
</dbReference>
<dbReference type="GO" id="GO:0160140">
    <property type="term" value="F:23S rRNA pseudouridine(1911/1915/1917) synthase activity"/>
    <property type="evidence" value="ECO:0007669"/>
    <property type="project" value="UniProtKB-EC"/>
</dbReference>
<dbReference type="GO" id="GO:0009982">
    <property type="term" value="F:pseudouridine synthase activity"/>
    <property type="evidence" value="ECO:0000318"/>
    <property type="project" value="GO_Central"/>
</dbReference>
<dbReference type="GO" id="GO:0003723">
    <property type="term" value="F:RNA binding"/>
    <property type="evidence" value="ECO:0007669"/>
    <property type="project" value="UniProtKB-KW"/>
</dbReference>
<dbReference type="GO" id="GO:0000455">
    <property type="term" value="P:enzyme-directed rRNA pseudouridine synthesis"/>
    <property type="evidence" value="ECO:0000318"/>
    <property type="project" value="GO_Central"/>
</dbReference>
<dbReference type="CDD" id="cd02869">
    <property type="entry name" value="PseudoU_synth_RluA_like"/>
    <property type="match status" value="1"/>
</dbReference>
<dbReference type="CDD" id="cd00165">
    <property type="entry name" value="S4"/>
    <property type="match status" value="1"/>
</dbReference>
<dbReference type="FunFam" id="3.30.2350.10:FF:000006">
    <property type="entry name" value="Pseudouridine synthase"/>
    <property type="match status" value="1"/>
</dbReference>
<dbReference type="Gene3D" id="3.30.2350.10">
    <property type="entry name" value="Pseudouridine synthase"/>
    <property type="match status" value="1"/>
</dbReference>
<dbReference type="Gene3D" id="3.10.290.10">
    <property type="entry name" value="RNA-binding S4 domain"/>
    <property type="match status" value="1"/>
</dbReference>
<dbReference type="InterPro" id="IPR020103">
    <property type="entry name" value="PsdUridine_synth_cat_dom_sf"/>
</dbReference>
<dbReference type="InterPro" id="IPR006224">
    <property type="entry name" value="PsdUridine_synth_RluA-like_CS"/>
</dbReference>
<dbReference type="InterPro" id="IPR006225">
    <property type="entry name" value="PsdUridine_synth_RluC/D"/>
</dbReference>
<dbReference type="InterPro" id="IPR006145">
    <property type="entry name" value="PsdUridine_synth_RsuA/RluA"/>
</dbReference>
<dbReference type="InterPro" id="IPR050188">
    <property type="entry name" value="RluA_PseudoU_synthase"/>
</dbReference>
<dbReference type="InterPro" id="IPR036986">
    <property type="entry name" value="S4_RNA-bd_sf"/>
</dbReference>
<dbReference type="NCBIfam" id="NF008385">
    <property type="entry name" value="PRK11180.1"/>
    <property type="match status" value="1"/>
</dbReference>
<dbReference type="NCBIfam" id="TIGR00005">
    <property type="entry name" value="rluA_subfam"/>
    <property type="match status" value="1"/>
</dbReference>
<dbReference type="PANTHER" id="PTHR21600">
    <property type="entry name" value="MITOCHONDRIAL RNA PSEUDOURIDINE SYNTHASE"/>
    <property type="match status" value="1"/>
</dbReference>
<dbReference type="PANTHER" id="PTHR21600:SF44">
    <property type="entry name" value="RIBOSOMAL LARGE SUBUNIT PSEUDOURIDINE SYNTHASE D"/>
    <property type="match status" value="1"/>
</dbReference>
<dbReference type="Pfam" id="PF00849">
    <property type="entry name" value="PseudoU_synth_2"/>
    <property type="match status" value="1"/>
</dbReference>
<dbReference type="SUPFAM" id="SSF55174">
    <property type="entry name" value="Alpha-L RNA-binding motif"/>
    <property type="match status" value="1"/>
</dbReference>
<dbReference type="SUPFAM" id="SSF55120">
    <property type="entry name" value="Pseudouridine synthase"/>
    <property type="match status" value="1"/>
</dbReference>
<dbReference type="PROSITE" id="PS01129">
    <property type="entry name" value="PSI_RLU"/>
    <property type="match status" value="1"/>
</dbReference>
<dbReference type="PROSITE" id="PS50889">
    <property type="entry name" value="S4"/>
    <property type="match status" value="1"/>
</dbReference>
<sequence length="331" mass="36150">MSDQSSEPLDSSLRQAVVPDSAAGRRFDAVLAELFPEFSRSRLSEWIKSGDALLDGETARPRDTLRGGETVQVQVVLETQTHAAPQDIPLNVLYEDDHVLVIDKPAGLVVHPGAGNPDGTLVNALLFRDPNLAAVPRAGVVHRLDKDTSGVMVVARTLQAQTALVEQLSARDVHRQYLAVVVGALVSGGTADAPIDRHPRDRLKMAVRDDGRDAVTHYRLRERFRAHTALECRLETGRTHQIRVHMAHLKSPIVGDPLYGGALKLPKGATDTLVAELRGFKRQALHAETLEFLHPVSGEPIRASAPVPEDLQRLMSALREDSARAAELARR</sequence>
<keyword id="KW-0963">Cytoplasm</keyword>
<keyword id="KW-0413">Isomerase</keyword>
<keyword id="KW-1185">Reference proteome</keyword>
<keyword id="KW-0694">RNA-binding</keyword>
<keyword id="KW-0698">rRNA processing</keyword>